<organism>
    <name type="scientific">Acinetobacter baumannii (strain ACICU)</name>
    <dbReference type="NCBI Taxonomy" id="405416"/>
    <lineage>
        <taxon>Bacteria</taxon>
        <taxon>Pseudomonadati</taxon>
        <taxon>Pseudomonadota</taxon>
        <taxon>Gammaproteobacteria</taxon>
        <taxon>Moraxellales</taxon>
        <taxon>Moraxellaceae</taxon>
        <taxon>Acinetobacter</taxon>
        <taxon>Acinetobacter calcoaceticus/baumannii complex</taxon>
    </lineage>
</organism>
<name>RLMN_ACIBC</name>
<dbReference type="EC" id="2.1.1.192" evidence="1"/>
<dbReference type="EMBL" id="CP000863">
    <property type="protein sequence ID" value="ACC55820.1"/>
    <property type="molecule type" value="Genomic_DNA"/>
</dbReference>
<dbReference type="RefSeq" id="WP_000093084.1">
    <property type="nucleotide sequence ID" value="NZ_CP031380.1"/>
</dbReference>
<dbReference type="SMR" id="B2I3E2"/>
<dbReference type="GeneID" id="92892502"/>
<dbReference type="KEGG" id="abc:ACICU_00508"/>
<dbReference type="HOGENOM" id="CLU_029101_0_0_6"/>
<dbReference type="Proteomes" id="UP000008839">
    <property type="component" value="Chromosome"/>
</dbReference>
<dbReference type="GO" id="GO:0005737">
    <property type="term" value="C:cytoplasm"/>
    <property type="evidence" value="ECO:0007669"/>
    <property type="project" value="UniProtKB-SubCell"/>
</dbReference>
<dbReference type="GO" id="GO:0051539">
    <property type="term" value="F:4 iron, 4 sulfur cluster binding"/>
    <property type="evidence" value="ECO:0007669"/>
    <property type="project" value="UniProtKB-UniRule"/>
</dbReference>
<dbReference type="GO" id="GO:0046872">
    <property type="term" value="F:metal ion binding"/>
    <property type="evidence" value="ECO:0007669"/>
    <property type="project" value="UniProtKB-KW"/>
</dbReference>
<dbReference type="GO" id="GO:0070040">
    <property type="term" value="F:rRNA (adenine(2503)-C2-)-methyltransferase activity"/>
    <property type="evidence" value="ECO:0007669"/>
    <property type="project" value="UniProtKB-UniRule"/>
</dbReference>
<dbReference type="GO" id="GO:0019843">
    <property type="term" value="F:rRNA binding"/>
    <property type="evidence" value="ECO:0007669"/>
    <property type="project" value="UniProtKB-UniRule"/>
</dbReference>
<dbReference type="GO" id="GO:0002935">
    <property type="term" value="F:tRNA (adenine(37)-C2)-methyltransferase activity"/>
    <property type="evidence" value="ECO:0007669"/>
    <property type="project" value="UniProtKB-UniRule"/>
</dbReference>
<dbReference type="GO" id="GO:0000049">
    <property type="term" value="F:tRNA binding"/>
    <property type="evidence" value="ECO:0007669"/>
    <property type="project" value="UniProtKB-UniRule"/>
</dbReference>
<dbReference type="GO" id="GO:0070475">
    <property type="term" value="P:rRNA base methylation"/>
    <property type="evidence" value="ECO:0007669"/>
    <property type="project" value="UniProtKB-UniRule"/>
</dbReference>
<dbReference type="GO" id="GO:0030488">
    <property type="term" value="P:tRNA methylation"/>
    <property type="evidence" value="ECO:0007669"/>
    <property type="project" value="UniProtKB-UniRule"/>
</dbReference>
<dbReference type="CDD" id="cd01335">
    <property type="entry name" value="Radical_SAM"/>
    <property type="match status" value="1"/>
</dbReference>
<dbReference type="FunFam" id="1.10.150.530:FF:000003">
    <property type="entry name" value="Dual-specificity RNA methyltransferase RlmN"/>
    <property type="match status" value="1"/>
</dbReference>
<dbReference type="FunFam" id="3.20.20.70:FF:000008">
    <property type="entry name" value="Dual-specificity RNA methyltransferase RlmN"/>
    <property type="match status" value="1"/>
</dbReference>
<dbReference type="Gene3D" id="1.10.150.530">
    <property type="match status" value="1"/>
</dbReference>
<dbReference type="Gene3D" id="3.20.20.70">
    <property type="entry name" value="Aldolase class I"/>
    <property type="match status" value="1"/>
</dbReference>
<dbReference type="HAMAP" id="MF_01849">
    <property type="entry name" value="RNA_methyltr_RlmN"/>
    <property type="match status" value="1"/>
</dbReference>
<dbReference type="InterPro" id="IPR013785">
    <property type="entry name" value="Aldolase_TIM"/>
</dbReference>
<dbReference type="InterPro" id="IPR040072">
    <property type="entry name" value="Methyltransferase_A"/>
</dbReference>
<dbReference type="InterPro" id="IPR048641">
    <property type="entry name" value="RlmN_N"/>
</dbReference>
<dbReference type="InterPro" id="IPR027492">
    <property type="entry name" value="RNA_MTrfase_RlmN"/>
</dbReference>
<dbReference type="InterPro" id="IPR004383">
    <property type="entry name" value="rRNA_lsu_MTrfase_RlmN/Cfr"/>
</dbReference>
<dbReference type="InterPro" id="IPR007197">
    <property type="entry name" value="rSAM"/>
</dbReference>
<dbReference type="NCBIfam" id="TIGR00048">
    <property type="entry name" value="rRNA_mod_RlmN"/>
    <property type="match status" value="1"/>
</dbReference>
<dbReference type="PANTHER" id="PTHR30544">
    <property type="entry name" value="23S RRNA METHYLTRANSFERASE"/>
    <property type="match status" value="1"/>
</dbReference>
<dbReference type="PANTHER" id="PTHR30544:SF5">
    <property type="entry name" value="RADICAL SAM CORE DOMAIN-CONTAINING PROTEIN"/>
    <property type="match status" value="1"/>
</dbReference>
<dbReference type="Pfam" id="PF04055">
    <property type="entry name" value="Radical_SAM"/>
    <property type="match status" value="1"/>
</dbReference>
<dbReference type="Pfam" id="PF21016">
    <property type="entry name" value="RlmN_N"/>
    <property type="match status" value="1"/>
</dbReference>
<dbReference type="PIRSF" id="PIRSF006004">
    <property type="entry name" value="CHP00048"/>
    <property type="match status" value="1"/>
</dbReference>
<dbReference type="SFLD" id="SFLDF00275">
    <property type="entry name" value="adenosine_C2_methyltransferase"/>
    <property type="match status" value="1"/>
</dbReference>
<dbReference type="SFLD" id="SFLDG01062">
    <property type="entry name" value="methyltransferase_(Class_A)"/>
    <property type="match status" value="1"/>
</dbReference>
<dbReference type="SUPFAM" id="SSF102114">
    <property type="entry name" value="Radical SAM enzymes"/>
    <property type="match status" value="1"/>
</dbReference>
<dbReference type="PROSITE" id="PS51918">
    <property type="entry name" value="RADICAL_SAM"/>
    <property type="match status" value="1"/>
</dbReference>
<protein>
    <recommendedName>
        <fullName evidence="1">Dual-specificity RNA methyltransferase RlmN</fullName>
        <ecNumber evidence="1">2.1.1.192</ecNumber>
    </recommendedName>
    <alternativeName>
        <fullName evidence="1">23S rRNA (adenine(2503)-C(2))-methyltransferase</fullName>
    </alternativeName>
    <alternativeName>
        <fullName evidence="1">23S rRNA m2A2503 methyltransferase</fullName>
    </alternativeName>
    <alternativeName>
        <fullName evidence="1">Ribosomal RNA large subunit methyltransferase N</fullName>
    </alternativeName>
    <alternativeName>
        <fullName evidence="1">tRNA (adenine(37)-C(2))-methyltransferase</fullName>
    </alternativeName>
    <alternativeName>
        <fullName evidence="1">tRNA m2A37 methyltransferase</fullName>
    </alternativeName>
</protein>
<reference key="1">
    <citation type="journal article" date="2008" name="Antimicrob. Agents Chemother.">
        <title>Whole-genome pyrosequencing of an epidemic multidrug-resistant Acinetobacter baumannii strain belonging to the European clone II group.</title>
        <authorList>
            <person name="Iacono M."/>
            <person name="Villa L."/>
            <person name="Fortini D."/>
            <person name="Bordoni R."/>
            <person name="Imperi F."/>
            <person name="Bonnal R.J."/>
            <person name="Sicheritz-Ponten T."/>
            <person name="De Bellis G."/>
            <person name="Visca P."/>
            <person name="Cassone A."/>
            <person name="Carattoli A."/>
        </authorList>
    </citation>
    <scope>NUCLEOTIDE SEQUENCE [LARGE SCALE GENOMIC DNA]</scope>
    <source>
        <strain>ACICU</strain>
    </source>
</reference>
<accession>B2I3E2</accession>
<proteinExistence type="inferred from homology"/>
<sequence length="410" mass="45757">MSSAVVVSSENLDGQQQSSSTPASPAAEKVNLLGMSRAELEKFFEDIGEKKFRAGQVMKWIHQYFVTDFAEMTNISGKLRAKLEQICEIKAPEVVHRHYSKDGTRKWVFRVGEGSGSLVETVLIPAEDKTGSRKTLCISSQVGCALDCSFCSTGKQGFQRDLTPDEIIGQLWMANYSYMEEVPVAERERSVTNVVMMGMGEPLLNYDAVLSSMHIMLDDFAYGMSKRRVTLSTSGVVPKIDQLAKDIDVALAISLHAPNDELRNELVPINKKYPLAQLIAACQRYIAKDGNESARKHVTIEYVMLEGVNDQPEHAQQLLKLLKNLPSKINLIPFNPFPHAPYGRSSRNRIISFQKTLSDAGFVCTIRQTRGDDIDAACGQLVGQVADRTRRAEQWQKKVAQRQEILRTQG</sequence>
<gene>
    <name evidence="1" type="primary">rlmN</name>
    <name type="ordered locus">ACICU_00508</name>
</gene>
<evidence type="ECO:0000255" key="1">
    <source>
        <dbReference type="HAMAP-Rule" id="MF_01849"/>
    </source>
</evidence>
<evidence type="ECO:0000255" key="2">
    <source>
        <dbReference type="PROSITE-ProRule" id="PRU01266"/>
    </source>
</evidence>
<evidence type="ECO:0000256" key="3">
    <source>
        <dbReference type="SAM" id="MobiDB-lite"/>
    </source>
</evidence>
<feature type="chain" id="PRO_0000349997" description="Dual-specificity RNA methyltransferase RlmN">
    <location>
        <begin position="1"/>
        <end position="410"/>
    </location>
</feature>
<feature type="domain" description="Radical SAM core" evidence="2">
    <location>
        <begin position="130"/>
        <end position="373"/>
    </location>
</feature>
<feature type="region of interest" description="Disordered" evidence="3">
    <location>
        <begin position="7"/>
        <end position="26"/>
    </location>
</feature>
<feature type="compositionally biased region" description="Low complexity" evidence="3">
    <location>
        <begin position="15"/>
        <end position="26"/>
    </location>
</feature>
<feature type="active site" description="Proton acceptor" evidence="1">
    <location>
        <position position="120"/>
    </location>
</feature>
<feature type="active site" description="S-methylcysteine intermediate" evidence="1">
    <location>
        <position position="378"/>
    </location>
</feature>
<feature type="binding site" evidence="1">
    <location>
        <position position="144"/>
    </location>
    <ligand>
        <name>[4Fe-4S] cluster</name>
        <dbReference type="ChEBI" id="CHEBI:49883"/>
        <note>4Fe-4S-S-AdoMet</note>
    </ligand>
</feature>
<feature type="binding site" evidence="1">
    <location>
        <position position="148"/>
    </location>
    <ligand>
        <name>[4Fe-4S] cluster</name>
        <dbReference type="ChEBI" id="CHEBI:49883"/>
        <note>4Fe-4S-S-AdoMet</note>
    </ligand>
</feature>
<feature type="binding site" evidence="1">
    <location>
        <position position="151"/>
    </location>
    <ligand>
        <name>[4Fe-4S] cluster</name>
        <dbReference type="ChEBI" id="CHEBI:49883"/>
        <note>4Fe-4S-S-AdoMet</note>
    </ligand>
</feature>
<feature type="binding site" evidence="1">
    <location>
        <begin position="200"/>
        <end position="201"/>
    </location>
    <ligand>
        <name>S-adenosyl-L-methionine</name>
        <dbReference type="ChEBI" id="CHEBI:59789"/>
    </ligand>
</feature>
<feature type="binding site" evidence="1">
    <location>
        <position position="232"/>
    </location>
    <ligand>
        <name>S-adenosyl-L-methionine</name>
        <dbReference type="ChEBI" id="CHEBI:59789"/>
    </ligand>
</feature>
<feature type="binding site" evidence="1">
    <location>
        <begin position="254"/>
        <end position="256"/>
    </location>
    <ligand>
        <name>S-adenosyl-L-methionine</name>
        <dbReference type="ChEBI" id="CHEBI:59789"/>
    </ligand>
</feature>
<feature type="binding site" evidence="1">
    <location>
        <position position="335"/>
    </location>
    <ligand>
        <name>S-adenosyl-L-methionine</name>
        <dbReference type="ChEBI" id="CHEBI:59789"/>
    </ligand>
</feature>
<feature type="disulfide bond" description="(transient)" evidence="1">
    <location>
        <begin position="137"/>
        <end position="378"/>
    </location>
</feature>
<comment type="function">
    <text evidence="1">Specifically methylates position 2 of adenine 2503 in 23S rRNA and position 2 of adenine 37 in tRNAs. m2A2503 modification seems to play a crucial role in the proofreading step occurring at the peptidyl transferase center and thus would serve to optimize ribosomal fidelity.</text>
</comment>
<comment type="catalytic activity">
    <reaction evidence="1">
        <text>adenosine(2503) in 23S rRNA + 2 reduced [2Fe-2S]-[ferredoxin] + 2 S-adenosyl-L-methionine = 2-methyladenosine(2503) in 23S rRNA + 5'-deoxyadenosine + L-methionine + 2 oxidized [2Fe-2S]-[ferredoxin] + S-adenosyl-L-homocysteine</text>
        <dbReference type="Rhea" id="RHEA:42916"/>
        <dbReference type="Rhea" id="RHEA-COMP:10000"/>
        <dbReference type="Rhea" id="RHEA-COMP:10001"/>
        <dbReference type="Rhea" id="RHEA-COMP:10152"/>
        <dbReference type="Rhea" id="RHEA-COMP:10282"/>
        <dbReference type="ChEBI" id="CHEBI:17319"/>
        <dbReference type="ChEBI" id="CHEBI:33737"/>
        <dbReference type="ChEBI" id="CHEBI:33738"/>
        <dbReference type="ChEBI" id="CHEBI:57844"/>
        <dbReference type="ChEBI" id="CHEBI:57856"/>
        <dbReference type="ChEBI" id="CHEBI:59789"/>
        <dbReference type="ChEBI" id="CHEBI:74411"/>
        <dbReference type="ChEBI" id="CHEBI:74497"/>
        <dbReference type="EC" id="2.1.1.192"/>
    </reaction>
</comment>
<comment type="catalytic activity">
    <reaction evidence="1">
        <text>adenosine(37) in tRNA + 2 reduced [2Fe-2S]-[ferredoxin] + 2 S-adenosyl-L-methionine = 2-methyladenosine(37) in tRNA + 5'-deoxyadenosine + L-methionine + 2 oxidized [2Fe-2S]-[ferredoxin] + S-adenosyl-L-homocysteine</text>
        <dbReference type="Rhea" id="RHEA:43332"/>
        <dbReference type="Rhea" id="RHEA-COMP:10000"/>
        <dbReference type="Rhea" id="RHEA-COMP:10001"/>
        <dbReference type="Rhea" id="RHEA-COMP:10162"/>
        <dbReference type="Rhea" id="RHEA-COMP:10485"/>
        <dbReference type="ChEBI" id="CHEBI:17319"/>
        <dbReference type="ChEBI" id="CHEBI:33737"/>
        <dbReference type="ChEBI" id="CHEBI:33738"/>
        <dbReference type="ChEBI" id="CHEBI:57844"/>
        <dbReference type="ChEBI" id="CHEBI:57856"/>
        <dbReference type="ChEBI" id="CHEBI:59789"/>
        <dbReference type="ChEBI" id="CHEBI:74411"/>
        <dbReference type="ChEBI" id="CHEBI:74497"/>
        <dbReference type="EC" id="2.1.1.192"/>
    </reaction>
</comment>
<comment type="cofactor">
    <cofactor evidence="1">
        <name>[4Fe-4S] cluster</name>
        <dbReference type="ChEBI" id="CHEBI:49883"/>
    </cofactor>
    <text evidence="1">Binds 1 [4Fe-4S] cluster. The cluster is coordinated with 3 cysteines and an exchangeable S-adenosyl-L-methionine.</text>
</comment>
<comment type="subcellular location">
    <subcellularLocation>
        <location evidence="1">Cytoplasm</location>
    </subcellularLocation>
</comment>
<comment type="miscellaneous">
    <text evidence="1">Reaction proceeds by a ping-pong mechanism involving intermediate methylation of a conserved cysteine residue.</text>
</comment>
<comment type="similarity">
    <text evidence="1">Belongs to the radical SAM superfamily. RlmN family.</text>
</comment>
<keyword id="KW-0004">4Fe-4S</keyword>
<keyword id="KW-0963">Cytoplasm</keyword>
<keyword id="KW-1015">Disulfide bond</keyword>
<keyword id="KW-0408">Iron</keyword>
<keyword id="KW-0411">Iron-sulfur</keyword>
<keyword id="KW-0479">Metal-binding</keyword>
<keyword id="KW-0489">Methyltransferase</keyword>
<keyword id="KW-0698">rRNA processing</keyword>
<keyword id="KW-0949">S-adenosyl-L-methionine</keyword>
<keyword id="KW-0808">Transferase</keyword>
<keyword id="KW-0819">tRNA processing</keyword>